<protein>
    <recommendedName>
        <fullName evidence="1">Methionine aminopeptidase 2-2</fullName>
        <shortName evidence="1">MAP 2-2</shortName>
        <shortName evidence="1">MetAP 2-2</shortName>
        <ecNumber evidence="1">3.4.11.18</ecNumber>
    </recommendedName>
    <alternativeName>
        <fullName evidence="1">Peptidase M</fullName>
    </alternativeName>
</protein>
<feature type="chain" id="PRO_0000407630" description="Methionine aminopeptidase 2-2">
    <location>
        <begin position="1"/>
        <end position="450"/>
    </location>
</feature>
<feature type="region of interest" description="Disordered" evidence="2">
    <location>
        <begin position="1"/>
        <end position="100"/>
    </location>
</feature>
<feature type="compositionally biased region" description="Basic and acidic residues" evidence="2">
    <location>
        <begin position="1"/>
        <end position="10"/>
    </location>
</feature>
<feature type="compositionally biased region" description="Basic and acidic residues" evidence="2">
    <location>
        <begin position="30"/>
        <end position="39"/>
    </location>
</feature>
<feature type="compositionally biased region" description="Acidic residues" evidence="2">
    <location>
        <begin position="47"/>
        <end position="56"/>
    </location>
</feature>
<feature type="compositionally biased region" description="Basic residues" evidence="2">
    <location>
        <begin position="69"/>
        <end position="86"/>
    </location>
</feature>
<feature type="binding site" evidence="1">
    <location>
        <position position="211"/>
    </location>
    <ligand>
        <name>substrate</name>
    </ligand>
</feature>
<feature type="binding site" evidence="1">
    <location>
        <position position="232"/>
    </location>
    <ligand>
        <name>a divalent metal cation</name>
        <dbReference type="ChEBI" id="CHEBI:60240"/>
        <label>1</label>
    </ligand>
</feature>
<feature type="binding site" evidence="1">
    <location>
        <position position="243"/>
    </location>
    <ligand>
        <name>a divalent metal cation</name>
        <dbReference type="ChEBI" id="CHEBI:60240"/>
        <label>1</label>
    </ligand>
</feature>
<feature type="binding site" evidence="1">
    <location>
        <position position="243"/>
    </location>
    <ligand>
        <name>a divalent metal cation</name>
        <dbReference type="ChEBI" id="CHEBI:60240"/>
        <label>2</label>
        <note>catalytic</note>
    </ligand>
</feature>
<feature type="binding site" evidence="1">
    <location>
        <position position="302"/>
    </location>
    <ligand>
        <name>a divalent metal cation</name>
        <dbReference type="ChEBI" id="CHEBI:60240"/>
        <label>2</label>
        <note>catalytic</note>
    </ligand>
</feature>
<feature type="binding site" evidence="1">
    <location>
        <position position="310"/>
    </location>
    <ligand>
        <name>substrate</name>
    </ligand>
</feature>
<feature type="binding site" evidence="1">
    <location>
        <position position="335"/>
    </location>
    <ligand>
        <name>a divalent metal cation</name>
        <dbReference type="ChEBI" id="CHEBI:60240"/>
        <label>2</label>
        <note>catalytic</note>
    </ligand>
</feature>
<feature type="binding site" evidence="1">
    <location>
        <position position="431"/>
    </location>
    <ligand>
        <name>a divalent metal cation</name>
        <dbReference type="ChEBI" id="CHEBI:60240"/>
        <label>1</label>
    </ligand>
</feature>
<feature type="binding site" evidence="1">
    <location>
        <position position="431"/>
    </location>
    <ligand>
        <name>a divalent metal cation</name>
        <dbReference type="ChEBI" id="CHEBI:60240"/>
        <label>2</label>
        <note>catalytic</note>
    </ligand>
</feature>
<organism>
    <name type="scientific">Fusarium vanettenii (strain ATCC MYA-4622 / CBS 123669 / FGSC 9596 / NRRL 45880 / 77-13-4)</name>
    <name type="common">Fusarium solani subsp. pisi</name>
    <dbReference type="NCBI Taxonomy" id="660122"/>
    <lineage>
        <taxon>Eukaryota</taxon>
        <taxon>Fungi</taxon>
        <taxon>Dikarya</taxon>
        <taxon>Ascomycota</taxon>
        <taxon>Pezizomycotina</taxon>
        <taxon>Sordariomycetes</taxon>
        <taxon>Hypocreomycetidae</taxon>
        <taxon>Hypocreales</taxon>
        <taxon>Nectriaceae</taxon>
        <taxon>Fusarium</taxon>
        <taxon>Fusarium solani species complex</taxon>
        <taxon>Fusarium vanettenii</taxon>
    </lineage>
</organism>
<proteinExistence type="inferred from homology"/>
<dbReference type="EC" id="3.4.11.18" evidence="1"/>
<dbReference type="EMBL" id="GG698911">
    <property type="protein sequence ID" value="EEU39759.1"/>
    <property type="molecule type" value="Genomic_DNA"/>
</dbReference>
<dbReference type="RefSeq" id="XP_003045472.1">
    <property type="nucleotide sequence ID" value="XM_003045426.1"/>
</dbReference>
<dbReference type="SMR" id="C7Z7V7"/>
<dbReference type="STRING" id="660122.C7Z7V7"/>
<dbReference type="EnsemblFungi" id="NechaT93045">
    <property type="protein sequence ID" value="NechaP93045"/>
    <property type="gene ID" value="NechaG93045"/>
</dbReference>
<dbReference type="GeneID" id="9672634"/>
<dbReference type="KEGG" id="nhe:NECHADRAFT_93045"/>
<dbReference type="VEuPathDB" id="FungiDB:NECHADRAFT_93045"/>
<dbReference type="eggNOG" id="KOG2775">
    <property type="taxonomic scope" value="Eukaryota"/>
</dbReference>
<dbReference type="HOGENOM" id="CLU_015857_7_1_1"/>
<dbReference type="InParanoid" id="C7Z7V7"/>
<dbReference type="OMA" id="ILRYHIH"/>
<dbReference type="OrthoDB" id="7848262at2759"/>
<dbReference type="Proteomes" id="UP000005206">
    <property type="component" value="Unassembled WGS sequence"/>
</dbReference>
<dbReference type="GO" id="GO:0005737">
    <property type="term" value="C:cytoplasm"/>
    <property type="evidence" value="ECO:0007669"/>
    <property type="project" value="UniProtKB-SubCell"/>
</dbReference>
<dbReference type="GO" id="GO:0004239">
    <property type="term" value="F:initiator methionyl aminopeptidase activity"/>
    <property type="evidence" value="ECO:0007669"/>
    <property type="project" value="UniProtKB-UniRule"/>
</dbReference>
<dbReference type="GO" id="GO:0046872">
    <property type="term" value="F:metal ion binding"/>
    <property type="evidence" value="ECO:0007669"/>
    <property type="project" value="UniProtKB-UniRule"/>
</dbReference>
<dbReference type="GO" id="GO:0070006">
    <property type="term" value="F:metalloaminopeptidase activity"/>
    <property type="evidence" value="ECO:0007669"/>
    <property type="project" value="UniProtKB-UniRule"/>
</dbReference>
<dbReference type="GO" id="GO:0006508">
    <property type="term" value="P:proteolysis"/>
    <property type="evidence" value="ECO:0007669"/>
    <property type="project" value="UniProtKB-KW"/>
</dbReference>
<dbReference type="CDD" id="cd01088">
    <property type="entry name" value="MetAP2"/>
    <property type="match status" value="1"/>
</dbReference>
<dbReference type="Gene3D" id="3.90.230.10">
    <property type="entry name" value="Creatinase/methionine aminopeptidase superfamily"/>
    <property type="match status" value="1"/>
</dbReference>
<dbReference type="Gene3D" id="1.10.10.10">
    <property type="entry name" value="Winged helix-like DNA-binding domain superfamily/Winged helix DNA-binding domain"/>
    <property type="match status" value="1"/>
</dbReference>
<dbReference type="HAMAP" id="MF_03175">
    <property type="entry name" value="MetAP_2_euk"/>
    <property type="match status" value="1"/>
</dbReference>
<dbReference type="InterPro" id="IPR036005">
    <property type="entry name" value="Creatinase/aminopeptidase-like"/>
</dbReference>
<dbReference type="InterPro" id="IPR050247">
    <property type="entry name" value="Met_Aminopeptidase_Type2"/>
</dbReference>
<dbReference type="InterPro" id="IPR000994">
    <property type="entry name" value="Pept_M24"/>
</dbReference>
<dbReference type="InterPro" id="IPR001714">
    <property type="entry name" value="Pept_M24_MAP"/>
</dbReference>
<dbReference type="InterPro" id="IPR002468">
    <property type="entry name" value="Pept_M24A_MAP2"/>
</dbReference>
<dbReference type="InterPro" id="IPR018349">
    <property type="entry name" value="Pept_M24A_MAP2_BS"/>
</dbReference>
<dbReference type="InterPro" id="IPR036388">
    <property type="entry name" value="WH-like_DNA-bd_sf"/>
</dbReference>
<dbReference type="InterPro" id="IPR036390">
    <property type="entry name" value="WH_DNA-bd_sf"/>
</dbReference>
<dbReference type="NCBIfam" id="TIGR00501">
    <property type="entry name" value="met_pdase_II"/>
    <property type="match status" value="1"/>
</dbReference>
<dbReference type="PANTHER" id="PTHR45777">
    <property type="entry name" value="METHIONINE AMINOPEPTIDASE 2"/>
    <property type="match status" value="1"/>
</dbReference>
<dbReference type="PANTHER" id="PTHR45777:SF1">
    <property type="entry name" value="METHIONINE AMINOPEPTIDASE 2-2"/>
    <property type="match status" value="1"/>
</dbReference>
<dbReference type="Pfam" id="PF00557">
    <property type="entry name" value="Peptidase_M24"/>
    <property type="match status" value="1"/>
</dbReference>
<dbReference type="PRINTS" id="PR00599">
    <property type="entry name" value="MAPEPTIDASE"/>
</dbReference>
<dbReference type="SUPFAM" id="SSF55920">
    <property type="entry name" value="Creatinase/aminopeptidase"/>
    <property type="match status" value="1"/>
</dbReference>
<dbReference type="SUPFAM" id="SSF46785">
    <property type="entry name" value="Winged helix' DNA-binding domain"/>
    <property type="match status" value="1"/>
</dbReference>
<dbReference type="PROSITE" id="PS01202">
    <property type="entry name" value="MAP_2"/>
    <property type="match status" value="1"/>
</dbReference>
<sequence length="450" mass="49173">MGAKISEDHPPQGNGGPLSNDPCSAGGEPRGAHLSRDGDGSVGDKGGDDDDDDDEGVVGAVSLTEASDKKKKKKRKPKKKKAKKATHQSSPPRVPLSELFTPGQYPTGEFLEYEDTNTARTTAAELRALGRKQLEDPAFLDDYRRAAEVHRQVRQWAQESVKPGQTLRDIANGIEDGVRALLGNQGLEPGDGLKSGMGFPTGLCLNHETAHYTPNPGQKDVVLQYEDVMKVDFGVHINGWIVDSAFTMSFDPTYDNLLAAVKDATNSGIKVNAAIQEAMESYEVEIAGKTYPVKPVRNISAHNIQHYRIHGGKSIPFIKNSDQTKMEEGEVFAIETFGTTGRGRLYDDVGIYGYKLENGGPSPASLPFASAKKLHKVIKENFGNIVFCRRYLERLGQERYLAGLNCLVSNGLLEAYEPLADVKGSYSAQFEHTILLRESSKEILSRGSDY</sequence>
<name>MAP22_FUSV7</name>
<accession>C7Z7V7</accession>
<reference key="1">
    <citation type="journal article" date="2009" name="PLoS Genet.">
        <title>The genome of Nectria haematococca: contribution of supernumerary chromosomes to gene expansion.</title>
        <authorList>
            <person name="Coleman J.J."/>
            <person name="Rounsley S.D."/>
            <person name="Rodriguez-Carres M."/>
            <person name="Kuo A."/>
            <person name="Wasmann C.C."/>
            <person name="Grimwood J."/>
            <person name="Schmutz J."/>
            <person name="Taga M."/>
            <person name="White G.J."/>
            <person name="Zhou S."/>
            <person name="Schwartz D.C."/>
            <person name="Freitag M."/>
            <person name="Ma L.-J."/>
            <person name="Danchin E.G.J."/>
            <person name="Henrissat B."/>
            <person name="Coutinho P.M."/>
            <person name="Nelson D.R."/>
            <person name="Straney D."/>
            <person name="Napoli C.A."/>
            <person name="Barker B.M."/>
            <person name="Gribskov M."/>
            <person name="Rep M."/>
            <person name="Kroken S."/>
            <person name="Molnar I."/>
            <person name="Rensing C."/>
            <person name="Kennell J.C."/>
            <person name="Zamora J."/>
            <person name="Farman M.L."/>
            <person name="Selker E.U."/>
            <person name="Salamov A."/>
            <person name="Shapiro H."/>
            <person name="Pangilinan J."/>
            <person name="Lindquist E."/>
            <person name="Lamers C."/>
            <person name="Grigoriev I.V."/>
            <person name="Geiser D.M."/>
            <person name="Covert S.F."/>
            <person name="Temporini E."/>
            <person name="VanEtten H.D."/>
        </authorList>
    </citation>
    <scope>NUCLEOTIDE SEQUENCE [LARGE SCALE GENOMIC DNA]</scope>
    <source>
        <strain>ATCC MYA-4622 / CBS 123669 / FGSC 9596 / NRRL 45880 / 77-13-4</strain>
    </source>
</reference>
<evidence type="ECO:0000255" key="1">
    <source>
        <dbReference type="HAMAP-Rule" id="MF_03175"/>
    </source>
</evidence>
<evidence type="ECO:0000256" key="2">
    <source>
        <dbReference type="SAM" id="MobiDB-lite"/>
    </source>
</evidence>
<keyword id="KW-0031">Aminopeptidase</keyword>
<keyword id="KW-0963">Cytoplasm</keyword>
<keyword id="KW-0378">Hydrolase</keyword>
<keyword id="KW-0479">Metal-binding</keyword>
<keyword id="KW-0645">Protease</keyword>
<keyword id="KW-1185">Reference proteome</keyword>
<gene>
    <name type="ORF">NECHADRAFT_93045</name>
</gene>
<comment type="function">
    <text evidence="1">Cotranslationally removes the N-terminal methionine from nascent proteins. The N-terminal methionine is often cleaved when the second residue in the primary sequence is small and uncharged (Met-Ala-, Cys, Gly, Pro, Ser, Thr, or Val).</text>
</comment>
<comment type="catalytic activity">
    <reaction evidence="1">
        <text>Release of N-terminal amino acids, preferentially methionine, from peptides and arylamides.</text>
        <dbReference type="EC" id="3.4.11.18"/>
    </reaction>
</comment>
<comment type="cofactor">
    <cofactor evidence="1">
        <name>Co(2+)</name>
        <dbReference type="ChEBI" id="CHEBI:48828"/>
    </cofactor>
    <cofactor evidence="1">
        <name>Zn(2+)</name>
        <dbReference type="ChEBI" id="CHEBI:29105"/>
    </cofactor>
    <cofactor evidence="1">
        <name>Mn(2+)</name>
        <dbReference type="ChEBI" id="CHEBI:29035"/>
    </cofactor>
    <cofactor evidence="1">
        <name>Fe(2+)</name>
        <dbReference type="ChEBI" id="CHEBI:29033"/>
    </cofactor>
    <text evidence="1">Binds 2 divalent metal cations per subunit. Has a high-affinity and a low affinity metal-binding site. The true nature of the physiological cofactor is under debate. The enzyme is active with cobalt, zinc, manganese or divalent iron ions. Most likely, methionine aminopeptidases function as mononuclear Fe(2+)-metalloproteases under physiological conditions, and the catalytically relevant metal-binding site has been assigned to the histidine-containing high-affinity site.</text>
</comment>
<comment type="subcellular location">
    <subcellularLocation>
        <location evidence="1">Cytoplasm</location>
    </subcellularLocation>
</comment>
<comment type="similarity">
    <text evidence="1">Belongs to the peptidase M24A family. Methionine aminopeptidase eukaryotic type 2 subfamily.</text>
</comment>